<proteinExistence type="inferred from homology"/>
<dbReference type="EMBL" id="X97740">
    <property type="protein sequence ID" value="CAA66324.1"/>
    <property type="molecule type" value="Genomic_DNA"/>
</dbReference>
<dbReference type="SMR" id="P79191"/>
<dbReference type="FunCoup" id="P79191">
    <property type="interactions" value="446"/>
</dbReference>
<dbReference type="STRING" id="9544.ENSMMUP00000003085"/>
<dbReference type="GlyCosmos" id="P79191">
    <property type="glycosylation" value="2 sites, No reported glycans"/>
</dbReference>
<dbReference type="PaxDb" id="9544-ENSMMUP00000003085"/>
<dbReference type="eggNOG" id="KOG3656">
    <property type="taxonomic scope" value="Eukaryota"/>
</dbReference>
<dbReference type="InParanoid" id="P79191"/>
<dbReference type="Proteomes" id="UP000006718">
    <property type="component" value="Unassembled WGS sequence"/>
</dbReference>
<dbReference type="GO" id="GO:0005886">
    <property type="term" value="C:plasma membrane"/>
    <property type="evidence" value="ECO:0000318"/>
    <property type="project" value="GO_Central"/>
</dbReference>
<dbReference type="GO" id="GO:0004875">
    <property type="term" value="F:complement receptor activity"/>
    <property type="evidence" value="ECO:0000318"/>
    <property type="project" value="GO_Central"/>
</dbReference>
<dbReference type="GO" id="GO:0004982">
    <property type="term" value="F:N-formyl peptide receptor activity"/>
    <property type="evidence" value="ECO:0000318"/>
    <property type="project" value="GO_Central"/>
</dbReference>
<dbReference type="GO" id="GO:0006935">
    <property type="term" value="P:chemotaxis"/>
    <property type="evidence" value="ECO:0007669"/>
    <property type="project" value="UniProtKB-KW"/>
</dbReference>
<dbReference type="GO" id="GO:0002430">
    <property type="term" value="P:complement receptor mediated signaling pathway"/>
    <property type="evidence" value="ECO:0000318"/>
    <property type="project" value="GO_Central"/>
</dbReference>
<dbReference type="GO" id="GO:0006954">
    <property type="term" value="P:inflammatory response"/>
    <property type="evidence" value="ECO:0000318"/>
    <property type="project" value="GO_Central"/>
</dbReference>
<dbReference type="GO" id="GO:0007200">
    <property type="term" value="P:phospholipase C-activating G protein-coupled receptor signaling pathway"/>
    <property type="evidence" value="ECO:0000318"/>
    <property type="project" value="GO_Central"/>
</dbReference>
<dbReference type="GO" id="GO:0007204">
    <property type="term" value="P:positive regulation of cytosolic calcium ion concentration"/>
    <property type="evidence" value="ECO:0000318"/>
    <property type="project" value="GO_Central"/>
</dbReference>
<dbReference type="FunFam" id="1.20.1070.10:FF:000034">
    <property type="entry name" value="G-protein coupled receptor 1"/>
    <property type="match status" value="1"/>
</dbReference>
<dbReference type="Gene3D" id="1.20.1070.10">
    <property type="entry name" value="Rhodopsin 7-helix transmembrane proteins"/>
    <property type="match status" value="1"/>
</dbReference>
<dbReference type="InterPro" id="IPR000826">
    <property type="entry name" value="Formyl_rcpt-rel"/>
</dbReference>
<dbReference type="InterPro" id="IPR000276">
    <property type="entry name" value="GPCR_Rhodpsn"/>
</dbReference>
<dbReference type="InterPro" id="IPR017452">
    <property type="entry name" value="GPCR_Rhodpsn_7TM"/>
</dbReference>
<dbReference type="PANTHER" id="PTHR24225">
    <property type="entry name" value="CHEMOTACTIC RECEPTOR"/>
    <property type="match status" value="1"/>
</dbReference>
<dbReference type="PANTHER" id="PTHR24225:SF16">
    <property type="entry name" value="N-FORMYL PEPTIDE RECEPTOR 3"/>
    <property type="match status" value="1"/>
</dbReference>
<dbReference type="Pfam" id="PF00001">
    <property type="entry name" value="7tm_1"/>
    <property type="match status" value="1"/>
</dbReference>
<dbReference type="PRINTS" id="PR00526">
    <property type="entry name" value="FMETLEUPHER"/>
</dbReference>
<dbReference type="PRINTS" id="PR00237">
    <property type="entry name" value="GPCRRHODOPSN"/>
</dbReference>
<dbReference type="SUPFAM" id="SSF81321">
    <property type="entry name" value="Family A G protein-coupled receptor-like"/>
    <property type="match status" value="1"/>
</dbReference>
<dbReference type="PROSITE" id="PS00237">
    <property type="entry name" value="G_PROTEIN_RECEP_F1_1"/>
    <property type="match status" value="1"/>
</dbReference>
<dbReference type="PROSITE" id="PS50262">
    <property type="entry name" value="G_PROTEIN_RECEP_F1_2"/>
    <property type="match status" value="1"/>
</dbReference>
<keyword id="KW-1003">Cell membrane</keyword>
<keyword id="KW-0145">Chemotaxis</keyword>
<keyword id="KW-1015">Disulfide bond</keyword>
<keyword id="KW-0297">G-protein coupled receptor</keyword>
<keyword id="KW-0325">Glycoprotein</keyword>
<keyword id="KW-0472">Membrane</keyword>
<keyword id="KW-0675">Receptor</keyword>
<keyword id="KW-1185">Reference proteome</keyword>
<keyword id="KW-0807">Transducer</keyword>
<keyword id="KW-0812">Transmembrane</keyword>
<keyword id="KW-1133">Transmembrane helix</keyword>
<protein>
    <recommendedName>
        <fullName>N-formyl peptide receptor 3</fullName>
    </recommendedName>
    <alternativeName>
        <fullName>FMLP-related receptor II</fullName>
        <shortName>FMLP-R-II</shortName>
    </alternativeName>
    <alternativeName>
        <fullName>Formyl peptide receptor-like 2</fullName>
    </alternativeName>
</protein>
<accession>P79191</accession>
<feature type="chain" id="PRO_0000069458" description="N-formyl peptide receptor 3">
    <location>
        <begin position="1"/>
        <end position="349" status="greater than"/>
    </location>
</feature>
<feature type="topological domain" description="Extracellular" evidence="1">
    <location>
        <begin position="1"/>
        <end position="27"/>
    </location>
</feature>
<feature type="transmembrane region" description="Helical; Name=1" evidence="1">
    <location>
        <begin position="28"/>
        <end position="50"/>
    </location>
</feature>
<feature type="topological domain" description="Cytoplasmic" evidence="1">
    <location>
        <begin position="51"/>
        <end position="61"/>
    </location>
</feature>
<feature type="transmembrane region" description="Helical; Name=2" evidence="1">
    <location>
        <begin position="62"/>
        <end position="83"/>
    </location>
</feature>
<feature type="topological domain" description="Extracellular" evidence="1">
    <location>
        <begin position="84"/>
        <end position="100"/>
    </location>
</feature>
<feature type="transmembrane region" description="Helical; Name=3" evidence="1">
    <location>
        <begin position="101"/>
        <end position="121"/>
    </location>
</feature>
<feature type="topological domain" description="Cytoplasmic" evidence="1">
    <location>
        <begin position="122"/>
        <end position="140"/>
    </location>
</feature>
<feature type="transmembrane region" description="Helical; Name=4" evidence="1">
    <location>
        <begin position="141"/>
        <end position="162"/>
    </location>
</feature>
<feature type="topological domain" description="Extracellular" evidence="1">
    <location>
        <begin position="163"/>
        <end position="205"/>
    </location>
</feature>
<feature type="transmembrane region" description="Helical; Name=5" evidence="1">
    <location>
        <begin position="206"/>
        <end position="226"/>
    </location>
</feature>
<feature type="topological domain" description="Cytoplasmic" evidence="1">
    <location>
        <begin position="227"/>
        <end position="242"/>
    </location>
</feature>
<feature type="transmembrane region" description="Helical; Name=6" evidence="1">
    <location>
        <begin position="243"/>
        <end position="266"/>
    </location>
</feature>
<feature type="topological domain" description="Extracellular" evidence="1">
    <location>
        <begin position="267"/>
        <end position="286"/>
    </location>
</feature>
<feature type="transmembrane region" description="Helical; Name=7" evidence="1">
    <location>
        <begin position="287"/>
        <end position="306"/>
    </location>
</feature>
<feature type="topological domain" description="Cytoplasmic" evidence="1">
    <location>
        <begin position="307"/>
        <end position="349" status="greater than"/>
    </location>
</feature>
<feature type="region of interest" description="Disordered" evidence="3">
    <location>
        <begin position="327"/>
        <end position="349"/>
    </location>
</feature>
<feature type="compositionally biased region" description="Polar residues" evidence="3">
    <location>
        <begin position="331"/>
        <end position="343"/>
    </location>
</feature>
<feature type="glycosylation site" description="N-linked (GlcNAc...) asparagine" evidence="1">
    <location>
        <position position="4"/>
    </location>
</feature>
<feature type="glycosylation site" description="N-linked (GlcNAc...) asparagine" evidence="1">
    <location>
        <position position="10"/>
    </location>
</feature>
<feature type="disulfide bond" evidence="2">
    <location>
        <begin position="98"/>
        <end position="176"/>
    </location>
</feature>
<feature type="non-terminal residue">
    <location>
        <position position="349"/>
    </location>
</feature>
<gene>
    <name type="primary">FPR3</name>
    <name type="synonym">FPRL2</name>
</gene>
<evidence type="ECO:0000255" key="1"/>
<evidence type="ECO:0000255" key="2">
    <source>
        <dbReference type="PROSITE-ProRule" id="PRU00521"/>
    </source>
</evidence>
<evidence type="ECO:0000256" key="3">
    <source>
        <dbReference type="SAM" id="MobiDB-lite"/>
    </source>
</evidence>
<name>FPR3_MACMU</name>
<organism>
    <name type="scientific">Macaca mulatta</name>
    <name type="common">Rhesus macaque</name>
    <dbReference type="NCBI Taxonomy" id="9544"/>
    <lineage>
        <taxon>Eukaryota</taxon>
        <taxon>Metazoa</taxon>
        <taxon>Chordata</taxon>
        <taxon>Craniata</taxon>
        <taxon>Vertebrata</taxon>
        <taxon>Euteleostomi</taxon>
        <taxon>Mammalia</taxon>
        <taxon>Eutheria</taxon>
        <taxon>Euarchontoglires</taxon>
        <taxon>Primates</taxon>
        <taxon>Haplorrhini</taxon>
        <taxon>Catarrhini</taxon>
        <taxon>Cercopithecidae</taxon>
        <taxon>Cercopithecinae</taxon>
        <taxon>Macaca</taxon>
    </lineage>
</organism>
<sequence>METNFSIPLNETEEVLPEPAGHTVLWIFSLLVHGVTFIFGVLGNGLVIWVAGFRMTRTVNTICYLNLALADFSFSAILPFHMVSVAMREKWPFGTFLCKLVHVMIDINLFVSVYLITIIALDRCICVLHPAWAQNHRTMSLAKRVMTGLWILTIVLTLPNFIFWTTISTTNGDTYCIFNYPFWGDTVVERMNVFITMAKVSLILHFIIGFSIPMSIITVCYGIIVAKIHKKRMTKSSRPLHIFTAVVASFFICWFPYELTGILMAVWLKEILLNGKYKIILVLINPTSSLAFFNSCLNPSLYVFMGHNFQERLIRSLPTSLERALTEVPDSAQTSNTHTTSASPPEETE</sequence>
<reference key="1">
    <citation type="journal article" date="1996" name="Immunogenetics">
        <title>Molecular evolution of the N-formyl peptide and C5a receptors in non-human primates.</title>
        <authorList>
            <person name="Alvarez V."/>
            <person name="Coto E."/>
            <person name="Sehen F."/>
            <person name="Gouzalek-Koces S."/>
            <person name="Lopez-Larrea C."/>
        </authorList>
    </citation>
    <scope>NUCLEOTIDE SEQUENCE [GENOMIC DNA]</scope>
</reference>
<comment type="function">
    <text>Low affinity receptor for N-formyl-methionyl peptides, which are powerful neutrophils chemotactic factors. Binding of FMLP to the receptor causes activation of neutrophils. This response is mediated via a G-protein that activates a phosphatidylinositol-calcium second messenger system.</text>
</comment>
<comment type="subcellular location">
    <subcellularLocation>
        <location>Cell membrane</location>
        <topology>Multi-pass membrane protein</topology>
    </subcellularLocation>
</comment>
<comment type="similarity">
    <text evidence="2">Belongs to the G-protein coupled receptor 1 family.</text>
</comment>